<comment type="function">
    <text evidence="1">Co-chaperone involved in the maturation of iron-sulfur cluster-containing proteins. Seems to help targeting proteins to be folded toward HscA.</text>
</comment>
<comment type="subunit">
    <text evidence="1">Interacts with HscA and stimulates its ATPase activity.</text>
</comment>
<comment type="similarity">
    <text evidence="1">Belongs to the HscB family.</text>
</comment>
<accession>A3NX34</accession>
<name>HSCB_BURP0</name>
<sequence>MVSLKDSHFDLFHLPARFALDEPTLDAAYRAVQSQVHPDRFAAAGDAQKRIAMQWATRANEAYQTLRDPLKRATYLLHLRGVDVGAENNTAMEPAFLMQQMEWRERIEDAAGAKNVDALDALLAELRDERRARLAKLGALLDSGSDQGAAEAVRQLMFVERVSAEIGAQIERLEH</sequence>
<protein>
    <recommendedName>
        <fullName evidence="1">Co-chaperone protein HscB homolog</fullName>
    </recommendedName>
</protein>
<feature type="chain" id="PRO_1000082998" description="Co-chaperone protein HscB homolog">
    <location>
        <begin position="1"/>
        <end position="175"/>
    </location>
</feature>
<feature type="domain" description="J" evidence="1">
    <location>
        <begin position="7"/>
        <end position="79"/>
    </location>
</feature>
<proteinExistence type="inferred from homology"/>
<reference key="1">
    <citation type="journal article" date="2010" name="Genome Biol. Evol.">
        <title>Continuing evolution of Burkholderia mallei through genome reduction and large-scale rearrangements.</title>
        <authorList>
            <person name="Losada L."/>
            <person name="Ronning C.M."/>
            <person name="DeShazer D."/>
            <person name="Woods D."/>
            <person name="Fedorova N."/>
            <person name="Kim H.S."/>
            <person name="Shabalina S.A."/>
            <person name="Pearson T.R."/>
            <person name="Brinkac L."/>
            <person name="Tan P."/>
            <person name="Nandi T."/>
            <person name="Crabtree J."/>
            <person name="Badger J."/>
            <person name="Beckstrom-Sternberg S."/>
            <person name="Saqib M."/>
            <person name="Schutzer S.E."/>
            <person name="Keim P."/>
            <person name="Nierman W.C."/>
        </authorList>
    </citation>
    <scope>NUCLEOTIDE SEQUENCE [LARGE SCALE GENOMIC DNA]</scope>
    <source>
        <strain>1106a</strain>
    </source>
</reference>
<gene>
    <name evidence="1" type="primary">hscB</name>
    <name type="ordered locus">BURPS1106A_2652</name>
</gene>
<organism>
    <name type="scientific">Burkholderia pseudomallei (strain 1106a)</name>
    <dbReference type="NCBI Taxonomy" id="357348"/>
    <lineage>
        <taxon>Bacteria</taxon>
        <taxon>Pseudomonadati</taxon>
        <taxon>Pseudomonadota</taxon>
        <taxon>Betaproteobacteria</taxon>
        <taxon>Burkholderiales</taxon>
        <taxon>Burkholderiaceae</taxon>
        <taxon>Burkholderia</taxon>
        <taxon>pseudomallei group</taxon>
    </lineage>
</organism>
<keyword id="KW-0143">Chaperone</keyword>
<dbReference type="EMBL" id="CP000572">
    <property type="protein sequence ID" value="ABN91552.1"/>
    <property type="molecule type" value="Genomic_DNA"/>
</dbReference>
<dbReference type="RefSeq" id="WP_004202016.1">
    <property type="nucleotide sequence ID" value="NC_009076.1"/>
</dbReference>
<dbReference type="SMR" id="A3NX34"/>
<dbReference type="GeneID" id="93060843"/>
<dbReference type="KEGG" id="bpl:BURPS1106A_2652"/>
<dbReference type="HOGENOM" id="CLU_068529_2_1_4"/>
<dbReference type="Proteomes" id="UP000006738">
    <property type="component" value="Chromosome I"/>
</dbReference>
<dbReference type="GO" id="GO:1990230">
    <property type="term" value="C:iron-sulfur cluster transfer complex"/>
    <property type="evidence" value="ECO:0007669"/>
    <property type="project" value="TreeGrafter"/>
</dbReference>
<dbReference type="GO" id="GO:0001671">
    <property type="term" value="F:ATPase activator activity"/>
    <property type="evidence" value="ECO:0007669"/>
    <property type="project" value="InterPro"/>
</dbReference>
<dbReference type="GO" id="GO:0051087">
    <property type="term" value="F:protein-folding chaperone binding"/>
    <property type="evidence" value="ECO:0007669"/>
    <property type="project" value="InterPro"/>
</dbReference>
<dbReference type="GO" id="GO:0044571">
    <property type="term" value="P:[2Fe-2S] cluster assembly"/>
    <property type="evidence" value="ECO:0007669"/>
    <property type="project" value="InterPro"/>
</dbReference>
<dbReference type="GO" id="GO:0051259">
    <property type="term" value="P:protein complex oligomerization"/>
    <property type="evidence" value="ECO:0007669"/>
    <property type="project" value="InterPro"/>
</dbReference>
<dbReference type="GO" id="GO:0006457">
    <property type="term" value="P:protein folding"/>
    <property type="evidence" value="ECO:0007669"/>
    <property type="project" value="UniProtKB-UniRule"/>
</dbReference>
<dbReference type="CDD" id="cd06257">
    <property type="entry name" value="DnaJ"/>
    <property type="match status" value="1"/>
</dbReference>
<dbReference type="Gene3D" id="1.10.287.110">
    <property type="entry name" value="DnaJ domain"/>
    <property type="match status" value="1"/>
</dbReference>
<dbReference type="Gene3D" id="1.20.1280.20">
    <property type="entry name" value="HscB, C-terminal domain"/>
    <property type="match status" value="1"/>
</dbReference>
<dbReference type="HAMAP" id="MF_00682">
    <property type="entry name" value="HscB"/>
    <property type="match status" value="1"/>
</dbReference>
<dbReference type="InterPro" id="IPR001623">
    <property type="entry name" value="DnaJ_domain"/>
</dbReference>
<dbReference type="InterPro" id="IPR004640">
    <property type="entry name" value="HscB"/>
</dbReference>
<dbReference type="InterPro" id="IPR036386">
    <property type="entry name" value="HscB_C_sf"/>
</dbReference>
<dbReference type="InterPro" id="IPR009073">
    <property type="entry name" value="HscB_oligo_C"/>
</dbReference>
<dbReference type="InterPro" id="IPR036869">
    <property type="entry name" value="J_dom_sf"/>
</dbReference>
<dbReference type="NCBIfam" id="TIGR00714">
    <property type="entry name" value="hscB"/>
    <property type="match status" value="1"/>
</dbReference>
<dbReference type="NCBIfam" id="NF002935">
    <property type="entry name" value="PRK03578.1"/>
    <property type="match status" value="1"/>
</dbReference>
<dbReference type="PANTHER" id="PTHR14021">
    <property type="entry name" value="IRON-SULFUR CLUSTER CO-CHAPERONE PROTEIN HSCB"/>
    <property type="match status" value="1"/>
</dbReference>
<dbReference type="PANTHER" id="PTHR14021:SF15">
    <property type="entry name" value="IRON-SULFUR CLUSTER CO-CHAPERONE PROTEIN HSCB"/>
    <property type="match status" value="1"/>
</dbReference>
<dbReference type="Pfam" id="PF07743">
    <property type="entry name" value="HSCB_C"/>
    <property type="match status" value="1"/>
</dbReference>
<dbReference type="SMART" id="SM00271">
    <property type="entry name" value="DnaJ"/>
    <property type="match status" value="1"/>
</dbReference>
<dbReference type="SUPFAM" id="SSF46565">
    <property type="entry name" value="Chaperone J-domain"/>
    <property type="match status" value="1"/>
</dbReference>
<dbReference type="SUPFAM" id="SSF47144">
    <property type="entry name" value="HSC20 (HSCB), C-terminal oligomerisation domain"/>
    <property type="match status" value="1"/>
</dbReference>
<dbReference type="PROSITE" id="PS50076">
    <property type="entry name" value="DNAJ_2"/>
    <property type="match status" value="1"/>
</dbReference>
<evidence type="ECO:0000255" key="1">
    <source>
        <dbReference type="HAMAP-Rule" id="MF_00682"/>
    </source>
</evidence>